<dbReference type="EMBL" id="U60188">
    <property type="protein sequence ID" value="AAB03410.1"/>
    <property type="molecule type" value="Genomic_RNA"/>
</dbReference>
<dbReference type="SMR" id="Q64917"/>
<dbReference type="InterPro" id="IPR002565">
    <property type="entry name" value="Orbi_NS3"/>
</dbReference>
<dbReference type="Pfam" id="PF01616">
    <property type="entry name" value="Orbi_NS3"/>
    <property type="match status" value="1"/>
</dbReference>
<name>VNS3_AHSV5</name>
<sequence>MNLAAIAKNYSMHNGESGTIVPYVPPPYNFASAPTFSQRTSQMESVSLGILNQAMSSTTGASGALKDEKAAFGAMAEALRDPEPIRQIKKQVGIRTLKNLKMELATMRRKKSALKIMIFISGCVTLATSMVGGLSIVDDEILGDYKNNDWLMKTIHGLNLLCTTVLLAAGKISDKIQEEISRTKRDIAKRESYVSAASMSWNGDTEMSLQGIKYGES</sequence>
<organismHost>
    <name type="scientific">Camelus dromedarius</name>
    <name type="common">Dromedary</name>
    <name type="synonym">Arabian camel</name>
    <dbReference type="NCBI Taxonomy" id="9838"/>
</organismHost>
<organismHost>
    <name type="scientific">Canis lupus familiaris</name>
    <name type="common">Dog</name>
    <name type="synonym">Canis familiaris</name>
    <dbReference type="NCBI Taxonomy" id="9615"/>
</organismHost>
<organismHost>
    <name type="scientific">Equus asinus</name>
    <name type="common">Donkey</name>
    <name type="synonym">Equus africanus asinus</name>
    <dbReference type="NCBI Taxonomy" id="9793"/>
</organismHost>
<organismHost>
    <name type="scientific">Equus caballus</name>
    <name type="common">Horse</name>
    <dbReference type="NCBI Taxonomy" id="9796"/>
</organismHost>
<organismHost>
    <name type="scientific">Equus hemionus</name>
    <name type="common">Onager</name>
    <name type="synonym">Asian wild ass</name>
    <dbReference type="NCBI Taxonomy" id="9794"/>
</organismHost>
<organismHost>
    <name type="scientific">Equus quagga burchellii</name>
    <name type="common">Burchell's zebra</name>
    <name type="synonym">Equus burchelli</name>
    <dbReference type="NCBI Taxonomy" id="89252"/>
</organismHost>
<organismHost>
    <name type="scientific">Loxodonta africana</name>
    <name type="common">African elephant</name>
    <dbReference type="NCBI Taxonomy" id="9785"/>
</organismHost>
<reference key="1">
    <citation type="submission" date="1996-06" db="EMBL/GenBank/DDBJ databases">
        <authorList>
            <person name="Zientara S."/>
            <person name="Sailleau C."/>
            <person name="Moulay S."/>
        </authorList>
    </citation>
    <scope>NUCLEOTIDE SEQUENCE [GENOMIC RNA]</scope>
</reference>
<accession>Q64917</accession>
<comment type="function">
    <text>May play a role in the release of virions from infected cells.</text>
</comment>
<comment type="similarity">
    <text evidence="1">Belongs to the orbivirus NS3 family.</text>
</comment>
<gene>
    <name type="primary">Segment-10</name>
</gene>
<feature type="chain" id="PRO_0000040644" description="Non-structural protein NS3">
    <location>
        <begin position="1"/>
        <end position="217"/>
    </location>
</feature>
<feature type="chain" id="PRO_0000040645" description="Non-structural protein NS3A">
    <location>
        <begin position="12"/>
        <end position="217"/>
    </location>
</feature>
<protein>
    <recommendedName>
        <fullName>Non-structural protein NS3</fullName>
    </recommendedName>
    <component>
        <recommendedName>
            <fullName>Non-structural protein NS3A</fullName>
        </recommendedName>
    </component>
</protein>
<proteinExistence type="inferred from homology"/>
<organism>
    <name type="scientific">African horse sickness virus 5</name>
    <name type="common">AHSV-5</name>
    <dbReference type="NCBI Taxonomy" id="86059"/>
    <lineage>
        <taxon>Viruses</taxon>
        <taxon>Riboviria</taxon>
        <taxon>Orthornavirae</taxon>
        <taxon>Duplornaviricota</taxon>
        <taxon>Resentoviricetes</taxon>
        <taxon>Reovirales</taxon>
        <taxon>Sedoreoviridae</taxon>
        <taxon>Orbivirus</taxon>
        <taxon>African horse sickness virus</taxon>
    </lineage>
</organism>
<evidence type="ECO:0000305" key="1"/>